<protein>
    <recommendedName>
        <fullName evidence="1">tRNA pseudouridine synthase A</fullName>
        <ecNumber evidence="1">5.4.99.12</ecNumber>
    </recommendedName>
    <alternativeName>
        <fullName evidence="1">tRNA pseudouridine(38-40) synthase</fullName>
    </alternativeName>
    <alternativeName>
        <fullName evidence="1">tRNA pseudouridylate synthase I</fullName>
    </alternativeName>
    <alternativeName>
        <fullName evidence="1">tRNA-uridine isomerase I</fullName>
    </alternativeName>
</protein>
<evidence type="ECO:0000255" key="1">
    <source>
        <dbReference type="HAMAP-Rule" id="MF_00171"/>
    </source>
</evidence>
<feature type="chain" id="PRO_1000097754" description="tRNA pseudouridine synthase A">
    <location>
        <begin position="1"/>
        <end position="256"/>
    </location>
</feature>
<feature type="active site" description="Nucleophile" evidence="1">
    <location>
        <position position="55"/>
    </location>
</feature>
<feature type="binding site" evidence="1">
    <location>
        <position position="113"/>
    </location>
    <ligand>
        <name>substrate</name>
    </ligand>
</feature>
<reference key="1">
    <citation type="journal article" date="2008" name="DNA Res.">
        <title>Comparative genome analysis of Lactobacillus reuteri and Lactobacillus fermentum reveal a genomic island for reuterin and cobalamin production.</title>
        <authorList>
            <person name="Morita H."/>
            <person name="Toh H."/>
            <person name="Fukuda S."/>
            <person name="Horikawa H."/>
            <person name="Oshima K."/>
            <person name="Suzuki T."/>
            <person name="Murakami M."/>
            <person name="Hisamatsu S."/>
            <person name="Kato Y."/>
            <person name="Takizawa T."/>
            <person name="Fukuoka H."/>
            <person name="Yoshimura T."/>
            <person name="Itoh K."/>
            <person name="O'Sullivan D.J."/>
            <person name="McKay L.L."/>
            <person name="Ohno H."/>
            <person name="Kikuchi J."/>
            <person name="Masaoka T."/>
            <person name="Hattori M."/>
        </authorList>
    </citation>
    <scope>NUCLEOTIDE SEQUENCE [LARGE SCALE GENOMIC DNA]</scope>
    <source>
        <strain>JCM 1112</strain>
    </source>
</reference>
<organism>
    <name type="scientific">Limosilactobacillus reuteri subsp. reuteri (strain JCM 1112)</name>
    <name type="common">Lactobacillus reuteri</name>
    <dbReference type="NCBI Taxonomy" id="557433"/>
    <lineage>
        <taxon>Bacteria</taxon>
        <taxon>Bacillati</taxon>
        <taxon>Bacillota</taxon>
        <taxon>Bacilli</taxon>
        <taxon>Lactobacillales</taxon>
        <taxon>Lactobacillaceae</taxon>
        <taxon>Limosilactobacillus</taxon>
    </lineage>
</organism>
<comment type="function">
    <text evidence="1">Formation of pseudouridine at positions 38, 39 and 40 in the anticodon stem and loop of transfer RNAs.</text>
</comment>
<comment type="catalytic activity">
    <reaction evidence="1">
        <text>uridine(38/39/40) in tRNA = pseudouridine(38/39/40) in tRNA</text>
        <dbReference type="Rhea" id="RHEA:22376"/>
        <dbReference type="Rhea" id="RHEA-COMP:10085"/>
        <dbReference type="Rhea" id="RHEA-COMP:10087"/>
        <dbReference type="ChEBI" id="CHEBI:65314"/>
        <dbReference type="ChEBI" id="CHEBI:65315"/>
        <dbReference type="EC" id="5.4.99.12"/>
    </reaction>
</comment>
<comment type="subunit">
    <text evidence="1">Homodimer.</text>
</comment>
<comment type="similarity">
    <text evidence="1">Belongs to the tRNA pseudouridine synthase TruA family.</text>
</comment>
<proteinExistence type="inferred from homology"/>
<sequence length="256" mass="29138">MYRYKITFAYDGTNFSGFQIQPNKRTVEQTLKNAVNKIAKHPTPAIPVIGSGRTDAGVHALNQVAHFDIPYHLSNESMRKALNSILPLDILIKKAELVDNDFHARYSAHRKTYRYRVDQGEFVNPFKRNYTSHFKYPLNLEKMRKAADDLVGTHDFTSFVASGSQAKSNVRTIENITIKRDEVRNEVVFDFTGNGFLYNQVRIMVAFLLEIGSNQRPVDDVSRVLKAKDRTLARMTAPASGLYLVNVDYGTNDEKD</sequence>
<accession>B2G8U7</accession>
<gene>
    <name evidence="1" type="primary">truA</name>
    <name type="ordered locus">LAR_1363</name>
</gene>
<keyword id="KW-0413">Isomerase</keyword>
<keyword id="KW-0819">tRNA processing</keyword>
<dbReference type="EC" id="5.4.99.12" evidence="1"/>
<dbReference type="EMBL" id="AP007281">
    <property type="protein sequence ID" value="BAG25879.1"/>
    <property type="molecule type" value="Genomic_DNA"/>
</dbReference>
<dbReference type="RefSeq" id="WP_003664519.1">
    <property type="nucleotide sequence ID" value="NC_010609.1"/>
</dbReference>
<dbReference type="SMR" id="B2G8U7"/>
<dbReference type="KEGG" id="lrf:LAR_1363"/>
<dbReference type="HOGENOM" id="CLU_014673_0_1_9"/>
<dbReference type="GO" id="GO:0003723">
    <property type="term" value="F:RNA binding"/>
    <property type="evidence" value="ECO:0007669"/>
    <property type="project" value="InterPro"/>
</dbReference>
<dbReference type="GO" id="GO:0160147">
    <property type="term" value="F:tRNA pseudouridine(38-40) synthase activity"/>
    <property type="evidence" value="ECO:0007669"/>
    <property type="project" value="UniProtKB-EC"/>
</dbReference>
<dbReference type="GO" id="GO:0031119">
    <property type="term" value="P:tRNA pseudouridine synthesis"/>
    <property type="evidence" value="ECO:0007669"/>
    <property type="project" value="UniProtKB-UniRule"/>
</dbReference>
<dbReference type="CDD" id="cd02570">
    <property type="entry name" value="PseudoU_synth_EcTruA"/>
    <property type="match status" value="1"/>
</dbReference>
<dbReference type="FunFam" id="3.30.70.580:FF:000001">
    <property type="entry name" value="tRNA pseudouridine synthase A"/>
    <property type="match status" value="1"/>
</dbReference>
<dbReference type="Gene3D" id="3.30.70.660">
    <property type="entry name" value="Pseudouridine synthase I, catalytic domain, C-terminal subdomain"/>
    <property type="match status" value="1"/>
</dbReference>
<dbReference type="Gene3D" id="3.30.70.580">
    <property type="entry name" value="Pseudouridine synthase I, catalytic domain, N-terminal subdomain"/>
    <property type="match status" value="1"/>
</dbReference>
<dbReference type="HAMAP" id="MF_00171">
    <property type="entry name" value="TruA"/>
    <property type="match status" value="1"/>
</dbReference>
<dbReference type="InterPro" id="IPR020103">
    <property type="entry name" value="PsdUridine_synth_cat_dom_sf"/>
</dbReference>
<dbReference type="InterPro" id="IPR001406">
    <property type="entry name" value="PsdUridine_synth_TruA"/>
</dbReference>
<dbReference type="InterPro" id="IPR020097">
    <property type="entry name" value="PsdUridine_synth_TruA_a/b_dom"/>
</dbReference>
<dbReference type="InterPro" id="IPR020095">
    <property type="entry name" value="PsdUridine_synth_TruA_C"/>
</dbReference>
<dbReference type="InterPro" id="IPR020094">
    <property type="entry name" value="TruA/RsuA/RluB/E/F_N"/>
</dbReference>
<dbReference type="NCBIfam" id="TIGR00071">
    <property type="entry name" value="hisT_truA"/>
    <property type="match status" value="1"/>
</dbReference>
<dbReference type="PANTHER" id="PTHR11142">
    <property type="entry name" value="PSEUDOURIDYLATE SYNTHASE"/>
    <property type="match status" value="1"/>
</dbReference>
<dbReference type="PANTHER" id="PTHR11142:SF0">
    <property type="entry name" value="TRNA PSEUDOURIDINE SYNTHASE-LIKE 1"/>
    <property type="match status" value="1"/>
</dbReference>
<dbReference type="Pfam" id="PF01416">
    <property type="entry name" value="PseudoU_synth_1"/>
    <property type="match status" value="2"/>
</dbReference>
<dbReference type="PIRSF" id="PIRSF001430">
    <property type="entry name" value="tRNA_psdUrid_synth"/>
    <property type="match status" value="1"/>
</dbReference>
<dbReference type="SUPFAM" id="SSF55120">
    <property type="entry name" value="Pseudouridine synthase"/>
    <property type="match status" value="1"/>
</dbReference>
<name>TRUA_LIMRJ</name>